<proteinExistence type="inferred from homology"/>
<dbReference type="EC" id="2.1.3.15" evidence="1"/>
<dbReference type="EMBL" id="AM421808">
    <property type="protein sequence ID" value="CAM10335.1"/>
    <property type="molecule type" value="Genomic_DNA"/>
</dbReference>
<dbReference type="RefSeq" id="WP_002224548.1">
    <property type="nucleotide sequence ID" value="NC_008767.1"/>
</dbReference>
<dbReference type="SMR" id="A1KTZ4"/>
<dbReference type="KEGG" id="nmc:NMC1078"/>
<dbReference type="HOGENOM" id="CLU_015486_0_2_4"/>
<dbReference type="UniPathway" id="UPA00655">
    <property type="reaction ID" value="UER00711"/>
</dbReference>
<dbReference type="Proteomes" id="UP000002286">
    <property type="component" value="Chromosome"/>
</dbReference>
<dbReference type="GO" id="GO:0009317">
    <property type="term" value="C:acetyl-CoA carboxylase complex"/>
    <property type="evidence" value="ECO:0007669"/>
    <property type="project" value="InterPro"/>
</dbReference>
<dbReference type="GO" id="GO:0003989">
    <property type="term" value="F:acetyl-CoA carboxylase activity"/>
    <property type="evidence" value="ECO:0007669"/>
    <property type="project" value="InterPro"/>
</dbReference>
<dbReference type="GO" id="GO:0005524">
    <property type="term" value="F:ATP binding"/>
    <property type="evidence" value="ECO:0007669"/>
    <property type="project" value="UniProtKB-KW"/>
</dbReference>
<dbReference type="GO" id="GO:0016743">
    <property type="term" value="F:carboxyl- or carbamoyltransferase activity"/>
    <property type="evidence" value="ECO:0007669"/>
    <property type="project" value="UniProtKB-UniRule"/>
</dbReference>
<dbReference type="GO" id="GO:0006633">
    <property type="term" value="P:fatty acid biosynthetic process"/>
    <property type="evidence" value="ECO:0007669"/>
    <property type="project" value="UniProtKB-KW"/>
</dbReference>
<dbReference type="GO" id="GO:2001295">
    <property type="term" value="P:malonyl-CoA biosynthetic process"/>
    <property type="evidence" value="ECO:0007669"/>
    <property type="project" value="UniProtKB-UniRule"/>
</dbReference>
<dbReference type="Gene3D" id="3.90.226.10">
    <property type="entry name" value="2-enoyl-CoA Hydratase, Chain A, domain 1"/>
    <property type="match status" value="1"/>
</dbReference>
<dbReference type="HAMAP" id="MF_00823">
    <property type="entry name" value="AcetylCoA_CT_alpha"/>
    <property type="match status" value="1"/>
</dbReference>
<dbReference type="InterPro" id="IPR001095">
    <property type="entry name" value="Acetyl_CoA_COase_a_su"/>
</dbReference>
<dbReference type="InterPro" id="IPR029045">
    <property type="entry name" value="ClpP/crotonase-like_dom_sf"/>
</dbReference>
<dbReference type="InterPro" id="IPR011763">
    <property type="entry name" value="COA_CT_C"/>
</dbReference>
<dbReference type="NCBIfam" id="TIGR00513">
    <property type="entry name" value="accA"/>
    <property type="match status" value="1"/>
</dbReference>
<dbReference type="NCBIfam" id="NF041504">
    <property type="entry name" value="AccA_sub"/>
    <property type="match status" value="1"/>
</dbReference>
<dbReference type="NCBIfam" id="NF004344">
    <property type="entry name" value="PRK05724.1"/>
    <property type="match status" value="1"/>
</dbReference>
<dbReference type="PANTHER" id="PTHR42853">
    <property type="entry name" value="ACETYL-COENZYME A CARBOXYLASE CARBOXYL TRANSFERASE SUBUNIT ALPHA"/>
    <property type="match status" value="1"/>
</dbReference>
<dbReference type="PANTHER" id="PTHR42853:SF3">
    <property type="entry name" value="ACETYL-COENZYME A CARBOXYLASE CARBOXYL TRANSFERASE SUBUNIT ALPHA, CHLOROPLASTIC"/>
    <property type="match status" value="1"/>
</dbReference>
<dbReference type="Pfam" id="PF03255">
    <property type="entry name" value="ACCA"/>
    <property type="match status" value="1"/>
</dbReference>
<dbReference type="PRINTS" id="PR01069">
    <property type="entry name" value="ACCCTRFRASEA"/>
</dbReference>
<dbReference type="SUPFAM" id="SSF52096">
    <property type="entry name" value="ClpP/crotonase"/>
    <property type="match status" value="1"/>
</dbReference>
<dbReference type="PROSITE" id="PS50989">
    <property type="entry name" value="COA_CT_CTER"/>
    <property type="match status" value="1"/>
</dbReference>
<organism>
    <name type="scientific">Neisseria meningitidis serogroup C / serotype 2a (strain ATCC 700532 / DSM 15464 / FAM18)</name>
    <dbReference type="NCBI Taxonomy" id="272831"/>
    <lineage>
        <taxon>Bacteria</taxon>
        <taxon>Pseudomonadati</taxon>
        <taxon>Pseudomonadota</taxon>
        <taxon>Betaproteobacteria</taxon>
        <taxon>Neisseriales</taxon>
        <taxon>Neisseriaceae</taxon>
        <taxon>Neisseria</taxon>
    </lineage>
</organism>
<feature type="chain" id="PRO_1000062639" description="Acetyl-coenzyme A carboxylase carboxyl transferase subunit alpha">
    <location>
        <begin position="1"/>
        <end position="319"/>
    </location>
</feature>
<feature type="domain" description="CoA carboxyltransferase C-terminal" evidence="2">
    <location>
        <begin position="39"/>
        <end position="293"/>
    </location>
</feature>
<sequence length="319" mass="35521">MKPVFLDFEQPIAELTNKIDELRFVQDESAVDISDEIHRLQKKSNDLTKSIFSKLTPAQISQVSRHPQRPYTLDYIEALFTDFEELHGDRHFADDYAIVGGLARFNGQSVMVVGHQKGRDTKEKIRRNFGMPRPEGYRKALRLMKTAEKFGLPVMTFIDTPGAYPGIGAEERGQSEAIGKNLYELTRLRVPVLCTVIGEGGSGGALAVAVGDYVNMLQYSTYSVISPEGCASILWKTAEKAADAAQALGITADRLQRLDLVDTVIKEPLGGAHRDFGQTMKNVKAVLEKQLHEAQSIPLADLLSRRFDRIMAYGKFSEQ</sequence>
<protein>
    <recommendedName>
        <fullName evidence="1">Acetyl-coenzyme A carboxylase carboxyl transferase subunit alpha</fullName>
        <shortName evidence="1">ACCase subunit alpha</shortName>
        <shortName evidence="1">Acetyl-CoA carboxylase carboxyltransferase subunit alpha</shortName>
        <ecNumber evidence="1">2.1.3.15</ecNumber>
    </recommendedName>
</protein>
<gene>
    <name evidence="1" type="primary">accA</name>
    <name type="ordered locus">NMC1078</name>
</gene>
<accession>A1KTZ4</accession>
<keyword id="KW-0067">ATP-binding</keyword>
<keyword id="KW-0963">Cytoplasm</keyword>
<keyword id="KW-0275">Fatty acid biosynthesis</keyword>
<keyword id="KW-0276">Fatty acid metabolism</keyword>
<keyword id="KW-0444">Lipid biosynthesis</keyword>
<keyword id="KW-0443">Lipid metabolism</keyword>
<keyword id="KW-0547">Nucleotide-binding</keyword>
<keyword id="KW-0808">Transferase</keyword>
<name>ACCA_NEIMF</name>
<comment type="function">
    <text evidence="1">Component of the acetyl coenzyme A carboxylase (ACC) complex. First, biotin carboxylase catalyzes the carboxylation of biotin on its carrier protein (BCCP) and then the CO(2) group is transferred by the carboxyltransferase to acetyl-CoA to form malonyl-CoA.</text>
</comment>
<comment type="catalytic activity">
    <reaction evidence="1">
        <text>N(6)-carboxybiotinyl-L-lysyl-[protein] + acetyl-CoA = N(6)-biotinyl-L-lysyl-[protein] + malonyl-CoA</text>
        <dbReference type="Rhea" id="RHEA:54728"/>
        <dbReference type="Rhea" id="RHEA-COMP:10505"/>
        <dbReference type="Rhea" id="RHEA-COMP:10506"/>
        <dbReference type="ChEBI" id="CHEBI:57288"/>
        <dbReference type="ChEBI" id="CHEBI:57384"/>
        <dbReference type="ChEBI" id="CHEBI:83144"/>
        <dbReference type="ChEBI" id="CHEBI:83145"/>
        <dbReference type="EC" id="2.1.3.15"/>
    </reaction>
</comment>
<comment type="pathway">
    <text evidence="1">Lipid metabolism; malonyl-CoA biosynthesis; malonyl-CoA from acetyl-CoA: step 1/1.</text>
</comment>
<comment type="subunit">
    <text evidence="1">Acetyl-CoA carboxylase is a heterohexamer composed of biotin carboxyl carrier protein (AccB), biotin carboxylase (AccC) and two subunits each of ACCase subunit alpha (AccA) and ACCase subunit beta (AccD).</text>
</comment>
<comment type="subcellular location">
    <subcellularLocation>
        <location evidence="1">Cytoplasm</location>
    </subcellularLocation>
</comment>
<comment type="similarity">
    <text evidence="1">Belongs to the AccA family.</text>
</comment>
<reference key="1">
    <citation type="journal article" date="2007" name="PLoS Genet.">
        <title>Meningococcal genetic variation mechanisms viewed through comparative analysis of serogroup C strain FAM18.</title>
        <authorList>
            <person name="Bentley S.D."/>
            <person name="Vernikos G.S."/>
            <person name="Snyder L.A.S."/>
            <person name="Churcher C."/>
            <person name="Arrowsmith C."/>
            <person name="Chillingworth T."/>
            <person name="Cronin A."/>
            <person name="Davis P.H."/>
            <person name="Holroyd N.E."/>
            <person name="Jagels K."/>
            <person name="Maddison M."/>
            <person name="Moule S."/>
            <person name="Rabbinowitsch E."/>
            <person name="Sharp S."/>
            <person name="Unwin L."/>
            <person name="Whitehead S."/>
            <person name="Quail M.A."/>
            <person name="Achtman M."/>
            <person name="Barrell B.G."/>
            <person name="Saunders N.J."/>
            <person name="Parkhill J."/>
        </authorList>
    </citation>
    <scope>NUCLEOTIDE SEQUENCE [LARGE SCALE GENOMIC DNA]</scope>
    <source>
        <strain>ATCC 700532 / DSM 15464 / FAM18</strain>
    </source>
</reference>
<evidence type="ECO:0000255" key="1">
    <source>
        <dbReference type="HAMAP-Rule" id="MF_00823"/>
    </source>
</evidence>
<evidence type="ECO:0000255" key="2">
    <source>
        <dbReference type="PROSITE-ProRule" id="PRU01137"/>
    </source>
</evidence>